<gene>
    <name type="primary">ash3</name>
</gene>
<sequence>MMNRIITANLANLASSLMLAQVLGWHEPVYPDQVKWAGLGTGVCASGYRPLTRDEAMSIKGNLVSRMGQWQITGLADRWVIMGPGYNGEIKQGTAGETWCYPNSPVSGEIPTLSDWNIPAGDEVDVQWRLVHDNDYFIKPVSYLAHYLGYAWVGGNHSPYVGEDMDVTRVGDGWLIKGNNDGGCSGYRCGEKSSIKVSNFSYTLEPDSFSHGQVTESGKQLVKTITANATNYTDLPQQVVVTLKYDKATNWSKTDTYSLSEKVTTKNKFQWPLVGETELAIEIAASQSWASQKGGSTTETVSVEARPTVPPHSSLPVRVALYKSNISYPYEFKAEVNYDLTMKGFLRWGGNAWYTHPDNRPTWEHTFRLGPFRGQGEQHPLPVDKRYIPGEVKWWDWNWTISEYGLSTMQNNLGRVLRPIRSAVTGDFYAESQFAGDIEIGQPQTRSAKAAQLRSASAEEVALTSVDLDSEALANEGFGNVSLTIVPVQ</sequence>
<feature type="signal peptide" evidence="2">
    <location>
        <begin position="1"/>
        <end position="24"/>
    </location>
</feature>
<feature type="chain" id="PRO_0000035628" description="Aerolysin">
    <location>
        <begin position="25"/>
        <end position="444"/>
    </location>
</feature>
<feature type="propeptide" id="PRO_0000035629" evidence="2">
    <location>
        <begin position="445"/>
        <end position="489"/>
    </location>
</feature>
<feature type="region of interest" description="Interaction with host N-linked glycan" evidence="1">
    <location>
        <begin position="70"/>
        <end position="86"/>
    </location>
</feature>
<feature type="region of interest" description="Part of the transmembrane beta-barrel after proteolytic activation of the toxin and insertion into the host membrane" evidence="1">
    <location>
        <begin position="257"/>
        <end position="289"/>
    </location>
</feature>
<feature type="region of interest" description="Interaction with glycans from host GPI-anchor" evidence="1">
    <location>
        <begin position="347"/>
        <end position="356"/>
    </location>
</feature>
<feature type="site" description="Important for oligomerization" evidence="1">
    <location>
        <position position="157"/>
    </location>
</feature>
<feature type="site" description="Important for heptamerization" evidence="1">
    <location>
        <position position="391"/>
    </location>
</feature>
<feature type="disulfide bond" evidence="1">
    <location>
        <begin position="44"/>
        <end position="100"/>
    </location>
</feature>
<feature type="disulfide bond" evidence="1">
    <location>
        <begin position="184"/>
        <end position="189"/>
    </location>
</feature>
<comment type="function">
    <text evidence="3">Secreted, cytolytic toxin that forms pores in host membranes after proteolytic removal of a C-terminal propeptide, leading to destruction of the membrane permeability barrier and cell death. The pores are formed by transmembrane beta-strands and are approximately 3 nm in diameter.</text>
</comment>
<comment type="subunit">
    <text evidence="1">Homodimer in solution; homoheptamer in the host membrane. After binding to GPI-anchored proteins in target membranes and proteolytic removal of the C-terminal propeptide, the protein assembles into a heptameric pre-pore complex. A further conformation change leads to insertion into the host membrane (By similarity).</text>
</comment>
<comment type="subcellular location">
    <subcellularLocation>
        <location evidence="3">Secreted</location>
    </subcellularLocation>
    <subcellularLocation>
        <location evidence="3">Host cell membrane</location>
    </subcellularLocation>
    <text>Secreted as a soluble precursor.</text>
</comment>
<comment type="domain">
    <text evidence="1">The C-terminal propeptide is required for normal protein folding and secretion; it maintains the aerolysin precursor in its soluble form and prevents premature heptamerization and pore formation.</text>
</comment>
<comment type="PTM">
    <text evidence="1">Proteolytic cleavage and subsequent release of the propeptide trigger a major conformation change, leading to the formation of a heptameric pre-pore that then inserts into the host membrane.</text>
</comment>
<comment type="similarity">
    <text evidence="4">Belongs to the aerolysin family.</text>
</comment>
<reference key="1">
    <citation type="journal article" date="1993" name="Microb. Pathog.">
        <title>Cloning and characterization of three hemolysin genes from Aeromonas salmonicida.</title>
        <authorList>
            <person name="Hirono I."/>
            <person name="Aoki T."/>
        </authorList>
    </citation>
    <scope>NUCLEOTIDE SEQUENCE [GENOMIC DNA]</scope>
    <scope>FUNCTION</scope>
    <scope>SUBCELLULAR LOCATION</scope>
    <source>
        <strain>17-2</strain>
    </source>
</reference>
<proteinExistence type="inferred from homology"/>
<organism>
    <name type="scientific">Aeromonas salmonicida</name>
    <dbReference type="NCBI Taxonomy" id="645"/>
    <lineage>
        <taxon>Bacteria</taxon>
        <taxon>Pseudomonadati</taxon>
        <taxon>Pseudomonadota</taxon>
        <taxon>Gammaproteobacteria</taxon>
        <taxon>Aeromonadales</taxon>
        <taxon>Aeromonadaceae</taxon>
        <taxon>Aeromonas</taxon>
    </lineage>
</organism>
<evidence type="ECO:0000250" key="1"/>
<evidence type="ECO:0000255" key="2"/>
<evidence type="ECO:0000269" key="3">
    <source>
    </source>
</evidence>
<evidence type="ECO:0000305" key="4"/>
<dbReference type="EMBL" id="X65048">
    <property type="protein sequence ID" value="CAA46184.1"/>
    <property type="molecule type" value="Genomic_DNA"/>
</dbReference>
<dbReference type="PIR" id="I39672">
    <property type="entry name" value="I39672"/>
</dbReference>
<dbReference type="SMR" id="Q08676"/>
<dbReference type="GO" id="GO:0005576">
    <property type="term" value="C:extracellular region"/>
    <property type="evidence" value="ECO:0007669"/>
    <property type="project" value="UniProtKB-SubCell"/>
</dbReference>
<dbReference type="GO" id="GO:0020002">
    <property type="term" value="C:host cell plasma membrane"/>
    <property type="evidence" value="ECO:0007669"/>
    <property type="project" value="UniProtKB-SubCell"/>
</dbReference>
<dbReference type="GO" id="GO:0016020">
    <property type="term" value="C:membrane"/>
    <property type="evidence" value="ECO:0007669"/>
    <property type="project" value="UniProtKB-KW"/>
</dbReference>
<dbReference type="GO" id="GO:0090729">
    <property type="term" value="F:toxin activity"/>
    <property type="evidence" value="ECO:0007669"/>
    <property type="project" value="UniProtKB-KW"/>
</dbReference>
<dbReference type="GO" id="GO:0031640">
    <property type="term" value="P:killing of cells of another organism"/>
    <property type="evidence" value="ECO:0007669"/>
    <property type="project" value="UniProtKB-KW"/>
</dbReference>
<dbReference type="CDD" id="cd20218">
    <property type="entry name" value="PFM_aerolysin"/>
    <property type="match status" value="1"/>
</dbReference>
<dbReference type="Gene3D" id="3.10.40.10">
    <property type="entry name" value="Aerolysin/Pertussis toxin (APT), N-terminal domain"/>
    <property type="match status" value="1"/>
</dbReference>
<dbReference type="Gene3D" id="3.30.412.10">
    <property type="entry name" value="Proaerolysin, chain A, domain 2"/>
    <property type="match status" value="1"/>
</dbReference>
<dbReference type="Gene3D" id="2.170.15.10">
    <property type="entry name" value="Proaerolysin, chain A, domain 3"/>
    <property type="match status" value="1"/>
</dbReference>
<dbReference type="InterPro" id="IPR055267">
    <property type="entry name" value="Aerolysin-like_C"/>
</dbReference>
<dbReference type="InterPro" id="IPR005831">
    <property type="entry name" value="Aerolysin/haemolysin_CS"/>
</dbReference>
<dbReference type="InterPro" id="IPR005830">
    <property type="entry name" value="Aerolysn"/>
</dbReference>
<dbReference type="InterPro" id="IPR005138">
    <property type="entry name" value="APT_dom"/>
</dbReference>
<dbReference type="InterPro" id="IPR037015">
    <property type="entry name" value="APT_N_sf"/>
</dbReference>
<dbReference type="InterPro" id="IPR016187">
    <property type="entry name" value="CTDL_fold"/>
</dbReference>
<dbReference type="Pfam" id="PF01117">
    <property type="entry name" value="Aerolysin"/>
    <property type="match status" value="1"/>
</dbReference>
<dbReference type="Pfam" id="PF03440">
    <property type="entry name" value="APT"/>
    <property type="match status" value="1"/>
</dbReference>
<dbReference type="PRINTS" id="PR00754">
    <property type="entry name" value="AEROLYSIN"/>
</dbReference>
<dbReference type="SMART" id="SM00999">
    <property type="entry name" value="Aerolysin"/>
    <property type="match status" value="1"/>
</dbReference>
<dbReference type="SUPFAM" id="SSF56973">
    <property type="entry name" value="Aerolisin/ETX pore-forming domain"/>
    <property type="match status" value="1"/>
</dbReference>
<dbReference type="SUPFAM" id="SSF56436">
    <property type="entry name" value="C-type lectin-like"/>
    <property type="match status" value="1"/>
</dbReference>
<dbReference type="PROSITE" id="PS00274">
    <property type="entry name" value="AEROLYSIN"/>
    <property type="match status" value="1"/>
</dbReference>
<protein>
    <recommendedName>
        <fullName>Aerolysin</fullName>
    </recommendedName>
    <alternativeName>
        <fullName>Hemolysin-3</fullName>
    </alternativeName>
</protein>
<keyword id="KW-0204">Cytolysis</keyword>
<keyword id="KW-1015">Disulfide bond</keyword>
<keyword id="KW-0354">Hemolysis</keyword>
<keyword id="KW-1032">Host cell membrane</keyword>
<keyword id="KW-1043">Host membrane</keyword>
<keyword id="KW-0472">Membrane</keyword>
<keyword id="KW-0964">Secreted</keyword>
<keyword id="KW-0732">Signal</keyword>
<keyword id="KW-0800">Toxin</keyword>
<keyword id="KW-0812">Transmembrane</keyword>
<keyword id="KW-1134">Transmembrane beta strand</keyword>
<keyword id="KW-0843">Virulence</keyword>
<accession>Q08676</accession>
<name>AERA_AERSA</name>